<name>5HT1A_CANLF</name>
<evidence type="ECO:0000250" key="1">
    <source>
        <dbReference type="UniProtKB" id="P08908"/>
    </source>
</evidence>
<evidence type="ECO:0000250" key="2">
    <source>
        <dbReference type="UniProtKB" id="P19327"/>
    </source>
</evidence>
<evidence type="ECO:0000250" key="3">
    <source>
        <dbReference type="UniProtKB" id="P41595"/>
    </source>
</evidence>
<evidence type="ECO:0000255" key="4"/>
<evidence type="ECO:0000255" key="5">
    <source>
        <dbReference type="PROSITE-ProRule" id="PRU00521"/>
    </source>
</evidence>
<evidence type="ECO:0000256" key="6">
    <source>
        <dbReference type="SAM" id="MobiDB-lite"/>
    </source>
</evidence>
<protein>
    <recommendedName>
        <fullName>5-hydroxytryptamine receptor 1A</fullName>
        <shortName>5-HT-1A</shortName>
        <shortName>5-HT1A</shortName>
    </recommendedName>
    <alternativeName>
        <fullName>Serotonin receptor 1A</fullName>
    </alternativeName>
</protein>
<gene>
    <name type="primary">HTR1A</name>
</gene>
<organism>
    <name type="scientific">Canis lupus familiaris</name>
    <name type="common">Dog</name>
    <name type="synonym">Canis familiaris</name>
    <dbReference type="NCBI Taxonomy" id="9615"/>
    <lineage>
        <taxon>Eukaryota</taxon>
        <taxon>Metazoa</taxon>
        <taxon>Chordata</taxon>
        <taxon>Craniata</taxon>
        <taxon>Vertebrata</taxon>
        <taxon>Euteleostomi</taxon>
        <taxon>Mammalia</taxon>
        <taxon>Eutheria</taxon>
        <taxon>Laurasiatheria</taxon>
        <taxon>Carnivora</taxon>
        <taxon>Caniformia</taxon>
        <taxon>Canidae</taxon>
        <taxon>Canis</taxon>
    </lineage>
</organism>
<accession>Q6XXX9</accession>
<proteinExistence type="inferred from homology"/>
<keyword id="KW-0085">Behavior</keyword>
<keyword id="KW-1003">Cell membrane</keyword>
<keyword id="KW-0966">Cell projection</keyword>
<keyword id="KW-1015">Disulfide bond</keyword>
<keyword id="KW-0297">G-protein coupled receptor</keyword>
<keyword id="KW-0325">Glycoprotein</keyword>
<keyword id="KW-0472">Membrane</keyword>
<keyword id="KW-0675">Receptor</keyword>
<keyword id="KW-1185">Reference proteome</keyword>
<keyword id="KW-0807">Transducer</keyword>
<keyword id="KW-0812">Transmembrane</keyword>
<keyword id="KW-1133">Transmembrane helix</keyword>
<reference key="1">
    <citation type="journal article" date="2004" name="J. Hered.">
        <title>A marker set for construction of a genetic map of the silver fox (Vulpes vulpes).</title>
        <authorList>
            <person name="Kukekova A.V."/>
            <person name="Trut L.N."/>
            <person name="Oskina I.N."/>
            <person name="Kharlamova A.V."/>
            <person name="Shikhevich S.G."/>
            <person name="Kirkness E.F."/>
            <person name="Aguirre G.D."/>
            <person name="Acland G.M."/>
        </authorList>
    </citation>
    <scope>NUCLEOTIDE SEQUENCE [GENOMIC DNA]</scope>
</reference>
<feature type="chain" id="PRO_0000068901" description="5-hydroxytryptamine receptor 1A">
    <location>
        <begin position="1"/>
        <end position="423"/>
    </location>
</feature>
<feature type="topological domain" description="Extracellular" evidence="1">
    <location>
        <begin position="1"/>
        <end position="38"/>
    </location>
</feature>
<feature type="transmembrane region" description="Helical; Name=1" evidence="1">
    <location>
        <begin position="39"/>
        <end position="59"/>
    </location>
</feature>
<feature type="topological domain" description="Cytoplasmic" evidence="1">
    <location>
        <begin position="60"/>
        <end position="73"/>
    </location>
</feature>
<feature type="transmembrane region" description="Helical; Name=2" evidence="1">
    <location>
        <begin position="74"/>
        <end position="98"/>
    </location>
</feature>
<feature type="topological domain" description="Extracellular" evidence="1">
    <location>
        <begin position="99"/>
        <end position="107"/>
    </location>
</feature>
<feature type="transmembrane region" description="Helical; Name=3" evidence="1">
    <location>
        <begin position="108"/>
        <end position="132"/>
    </location>
</feature>
<feature type="topological domain" description="Cytoplasmic" evidence="1">
    <location>
        <begin position="133"/>
        <end position="152"/>
    </location>
</feature>
<feature type="transmembrane region" description="Helical; Name=4" evidence="1">
    <location>
        <begin position="153"/>
        <end position="174"/>
    </location>
</feature>
<feature type="topological domain" description="Extracellular" evidence="1">
    <location>
        <begin position="175"/>
        <end position="193"/>
    </location>
</feature>
<feature type="transmembrane region" description="Helical; Name=5" evidence="1">
    <location>
        <begin position="194"/>
        <end position="216"/>
    </location>
</feature>
<feature type="topological domain" description="Cytoplasmic" evidence="1">
    <location>
        <begin position="217"/>
        <end position="346"/>
    </location>
</feature>
<feature type="transmembrane region" description="Helical; Name=6" evidence="1">
    <location>
        <begin position="347"/>
        <end position="370"/>
    </location>
</feature>
<feature type="topological domain" description="Extracellular" evidence="1">
    <location>
        <begin position="371"/>
        <end position="378"/>
    </location>
</feature>
<feature type="transmembrane region" description="Helical; Name=7" evidence="1">
    <location>
        <begin position="379"/>
        <end position="403"/>
    </location>
</feature>
<feature type="topological domain" description="Cytoplasmic" evidence="1">
    <location>
        <begin position="404"/>
        <end position="423"/>
    </location>
</feature>
<feature type="region of interest" description="Disordered" evidence="6">
    <location>
        <begin position="235"/>
        <end position="277"/>
    </location>
</feature>
<feature type="short sequence motif" description="DRY motif; important for ligand-induced conformation changes" evidence="3">
    <location>
        <begin position="133"/>
        <end position="135"/>
    </location>
</feature>
<feature type="short sequence motif" description="NPxxY motif; important for ligand-induced conformation changes and signaling" evidence="3">
    <location>
        <begin position="396"/>
        <end position="400"/>
    </location>
</feature>
<feature type="binding site" evidence="1">
    <location>
        <position position="116"/>
    </location>
    <ligand>
        <name>serotonin</name>
        <dbReference type="ChEBI" id="CHEBI:350546"/>
    </ligand>
</feature>
<feature type="binding site" evidence="1">
    <location>
        <position position="120"/>
    </location>
    <ligand>
        <name>serotonin</name>
        <dbReference type="ChEBI" id="CHEBI:350546"/>
    </ligand>
</feature>
<feature type="binding site" evidence="1">
    <location>
        <position position="345"/>
    </location>
    <ligand>
        <name>1D-myo-inositol 4-phosphate</name>
        <dbReference type="ChEBI" id="CHEBI:58469"/>
    </ligand>
</feature>
<feature type="binding site" evidence="1">
    <location>
        <position position="346"/>
    </location>
    <ligand>
        <name>1D-myo-inositol 4-phosphate</name>
        <dbReference type="ChEBI" id="CHEBI:58469"/>
    </ligand>
</feature>
<feature type="binding site" evidence="1">
    <location>
        <position position="352"/>
    </location>
    <ligand>
        <name>1D-myo-inositol 4-phosphate</name>
        <dbReference type="ChEBI" id="CHEBI:58469"/>
    </ligand>
</feature>
<feature type="binding site" evidence="1">
    <location>
        <position position="403"/>
    </location>
    <ligand>
        <name>1D-myo-inositol 4-phosphate</name>
        <dbReference type="ChEBI" id="CHEBI:58469"/>
    </ligand>
</feature>
<feature type="binding site" evidence="1">
    <location>
        <position position="404"/>
    </location>
    <ligand>
        <name>1D-myo-inositol 4-phosphate</name>
        <dbReference type="ChEBI" id="CHEBI:58469"/>
    </ligand>
</feature>
<feature type="binding site" evidence="1">
    <location>
        <position position="405"/>
    </location>
    <ligand>
        <name>1D-myo-inositol 4-phosphate</name>
        <dbReference type="ChEBI" id="CHEBI:58469"/>
    </ligand>
</feature>
<feature type="glycosylation site" description="N-linked (GlcNAc...) asparagine" evidence="4">
    <location>
        <position position="10"/>
    </location>
</feature>
<feature type="glycosylation site" description="N-linked (GlcNAc...) asparagine" evidence="4">
    <location>
        <position position="11"/>
    </location>
</feature>
<feature type="glycosylation site" description="N-linked (GlcNAc...) asparagine" evidence="4">
    <location>
        <position position="24"/>
    </location>
</feature>
<feature type="disulfide bond" evidence="5">
    <location>
        <begin position="109"/>
        <end position="187"/>
    </location>
</feature>
<sequence>MEGLSPRQGNNTTSSEGPFGTLGNATGISDVTFSYQVITSLLLGTLIFCAVLGNACVVAAIALERSLQNVANYLIGSLAVTDLMVSVLVLPMAALYQVLNKWTLGQVTCDLFIALDVLCCTSSILHLCAIALDRYWAITDPIDYVNKRTPRRAAALISLTWLIGFLISIPPMLGWRTPEDRSDPDACTISKDHGYTIYSTFGAFYIPLLLMLVLYGRIFRAARFRIRKTVKKAERKGADARSGVSPAPQPRKSVNGEPGGREWRQGPGSQAGGPLCTNGAVRRGDDGAALEVIEVHRVGSSKEHLPLPCEAGAIPCAPASFEKKNERNAEAKRKMALARERKTVKTLGIIMGTFILCWLPFFIVALVLPFCESSCHMPTLLGAIINWLGYSNSLLNPVIYAYFNKDFQNAFKKIVRCKFCRRR</sequence>
<dbReference type="EMBL" id="AY204570">
    <property type="protein sequence ID" value="AAP12467.1"/>
    <property type="molecule type" value="Genomic_DNA"/>
</dbReference>
<dbReference type="RefSeq" id="NP_001012397.1">
    <property type="nucleotide sequence ID" value="NM_001012397.1"/>
</dbReference>
<dbReference type="SMR" id="Q6XXX9"/>
<dbReference type="FunCoup" id="Q6XXX9">
    <property type="interactions" value="416"/>
</dbReference>
<dbReference type="STRING" id="9615.ENSCAFP00000037035"/>
<dbReference type="GlyCosmos" id="Q6XXX9">
    <property type="glycosylation" value="3 sites, No reported glycans"/>
</dbReference>
<dbReference type="PaxDb" id="9612-ENSCAFP00000037035"/>
<dbReference type="GeneID" id="487230"/>
<dbReference type="KEGG" id="cfa:487230"/>
<dbReference type="CTD" id="3350"/>
<dbReference type="eggNOG" id="KOG3656">
    <property type="taxonomic scope" value="Eukaryota"/>
</dbReference>
<dbReference type="InParanoid" id="Q6XXX9"/>
<dbReference type="OrthoDB" id="5955450at2759"/>
<dbReference type="Proteomes" id="UP000002254">
    <property type="component" value="Unplaced"/>
</dbReference>
<dbReference type="Proteomes" id="UP000694429">
    <property type="component" value="Unplaced"/>
</dbReference>
<dbReference type="Proteomes" id="UP000694542">
    <property type="component" value="Unplaced"/>
</dbReference>
<dbReference type="Proteomes" id="UP000805418">
    <property type="component" value="Unplaced"/>
</dbReference>
<dbReference type="GO" id="GO:0030425">
    <property type="term" value="C:dendrite"/>
    <property type="evidence" value="ECO:0000318"/>
    <property type="project" value="GO_Central"/>
</dbReference>
<dbReference type="GO" id="GO:0005886">
    <property type="term" value="C:plasma membrane"/>
    <property type="evidence" value="ECO:0000250"/>
    <property type="project" value="UniProtKB"/>
</dbReference>
<dbReference type="GO" id="GO:0045202">
    <property type="term" value="C:synapse"/>
    <property type="evidence" value="ECO:0007669"/>
    <property type="project" value="GOC"/>
</dbReference>
<dbReference type="GO" id="GO:0004993">
    <property type="term" value="F:G protein-coupled serotonin receptor activity"/>
    <property type="evidence" value="ECO:0000250"/>
    <property type="project" value="UniProtKB"/>
</dbReference>
<dbReference type="GO" id="GO:0030594">
    <property type="term" value="F:neurotransmitter receptor activity"/>
    <property type="evidence" value="ECO:0000318"/>
    <property type="project" value="GO_Central"/>
</dbReference>
<dbReference type="GO" id="GO:0051378">
    <property type="term" value="F:serotonin binding"/>
    <property type="evidence" value="ECO:0000318"/>
    <property type="project" value="GO_Central"/>
</dbReference>
<dbReference type="GO" id="GO:0007198">
    <property type="term" value="P:adenylate cyclase-inhibiting serotonin receptor signaling pathway"/>
    <property type="evidence" value="ECO:0000250"/>
    <property type="project" value="UniProtKB"/>
</dbReference>
<dbReference type="GO" id="GO:0001662">
    <property type="term" value="P:behavioral fear response"/>
    <property type="evidence" value="ECO:0000250"/>
    <property type="project" value="UniProtKB"/>
</dbReference>
<dbReference type="GO" id="GO:0007268">
    <property type="term" value="P:chemical synaptic transmission"/>
    <property type="evidence" value="ECO:0000318"/>
    <property type="project" value="GO_Central"/>
</dbReference>
<dbReference type="GO" id="GO:0035640">
    <property type="term" value="P:exploration behavior"/>
    <property type="evidence" value="ECO:0000250"/>
    <property type="project" value="UniProtKB"/>
</dbReference>
<dbReference type="GO" id="GO:0007187">
    <property type="term" value="P:G protein-coupled receptor signaling pathway, coupled to cyclic nucleotide second messenger"/>
    <property type="evidence" value="ECO:0000318"/>
    <property type="project" value="GO_Central"/>
</dbReference>
<dbReference type="GO" id="GO:0050795">
    <property type="term" value="P:regulation of behavior"/>
    <property type="evidence" value="ECO:0007669"/>
    <property type="project" value="InterPro"/>
</dbReference>
<dbReference type="GO" id="GO:0042053">
    <property type="term" value="P:regulation of dopamine metabolic process"/>
    <property type="evidence" value="ECO:0000250"/>
    <property type="project" value="UniProtKB"/>
</dbReference>
<dbReference type="GO" id="GO:0046883">
    <property type="term" value="P:regulation of hormone secretion"/>
    <property type="evidence" value="ECO:0007669"/>
    <property type="project" value="InterPro"/>
</dbReference>
<dbReference type="GO" id="GO:0014062">
    <property type="term" value="P:regulation of serotonin secretion"/>
    <property type="evidence" value="ECO:0000250"/>
    <property type="project" value="UniProtKB"/>
</dbReference>
<dbReference type="GO" id="GO:0019229">
    <property type="term" value="P:regulation of vasoconstriction"/>
    <property type="evidence" value="ECO:0007669"/>
    <property type="project" value="InterPro"/>
</dbReference>
<dbReference type="GO" id="GO:0042428">
    <property type="term" value="P:serotonin metabolic process"/>
    <property type="evidence" value="ECO:0000250"/>
    <property type="project" value="UniProtKB"/>
</dbReference>
<dbReference type="GO" id="GO:0007210">
    <property type="term" value="P:serotonin receptor signaling pathway"/>
    <property type="evidence" value="ECO:0000250"/>
    <property type="project" value="UniProtKB"/>
</dbReference>
<dbReference type="CDD" id="cd15330">
    <property type="entry name" value="7tmA_5-HT1A_vertebrates"/>
    <property type="match status" value="1"/>
</dbReference>
<dbReference type="Gene3D" id="1.20.1070.10">
    <property type="entry name" value="Rhodopsin 7-helix transmembrane proteins"/>
    <property type="match status" value="1"/>
</dbReference>
<dbReference type="InterPro" id="IPR000610">
    <property type="entry name" value="5HT1A_rcpt"/>
</dbReference>
<dbReference type="InterPro" id="IPR002231">
    <property type="entry name" value="5HT_rcpt"/>
</dbReference>
<dbReference type="InterPro" id="IPR000276">
    <property type="entry name" value="GPCR_Rhodpsn"/>
</dbReference>
<dbReference type="InterPro" id="IPR017452">
    <property type="entry name" value="GPCR_Rhodpsn_7TM"/>
</dbReference>
<dbReference type="PANTHER" id="PTHR24248:SF191">
    <property type="entry name" value="5-HYDROXYTRYPTAMINE RECEPTOR 1A"/>
    <property type="match status" value="1"/>
</dbReference>
<dbReference type="PANTHER" id="PTHR24248">
    <property type="entry name" value="ADRENERGIC RECEPTOR-RELATED G-PROTEIN COUPLED RECEPTOR"/>
    <property type="match status" value="1"/>
</dbReference>
<dbReference type="Pfam" id="PF00001">
    <property type="entry name" value="7tm_1"/>
    <property type="match status" value="1"/>
</dbReference>
<dbReference type="PRINTS" id="PR00512">
    <property type="entry name" value="5HT1ARECEPTR"/>
</dbReference>
<dbReference type="PRINTS" id="PR01101">
    <property type="entry name" value="5HTRECEPTOR"/>
</dbReference>
<dbReference type="PRINTS" id="PR00237">
    <property type="entry name" value="GPCRRHODOPSN"/>
</dbReference>
<dbReference type="SMART" id="SM01381">
    <property type="entry name" value="7TM_GPCR_Srsx"/>
    <property type="match status" value="1"/>
</dbReference>
<dbReference type="SUPFAM" id="SSF81321">
    <property type="entry name" value="Family A G protein-coupled receptor-like"/>
    <property type="match status" value="1"/>
</dbReference>
<dbReference type="PROSITE" id="PS00237">
    <property type="entry name" value="G_PROTEIN_RECEP_F1_1"/>
    <property type="match status" value="1"/>
</dbReference>
<dbReference type="PROSITE" id="PS50262">
    <property type="entry name" value="G_PROTEIN_RECEP_F1_2"/>
    <property type="match status" value="1"/>
</dbReference>
<comment type="function">
    <text evidence="1">G-protein coupled receptor for 5-hydroxytryptamine (serotonin). Also functions as a receptor for various drugs and psychoactive substances. Ligand binding causes a conformation change that triggers signaling via guanine nucleotide-binding proteins (G proteins) and modulates the activity of downstream effectors, such as adenylate cyclase. HTR1A is coupled to G(i)/G(o) G alpha proteins and mediates inhibitory neurotransmission: signaling inhibits adenylate cyclase activity and activates a phosphatidylinositol-calcium second messenger system that regulates the release of Ca(2+) ions from intracellular stores. Beta-arrestin family members regulate signaling by mediating both receptor desensitization and resensitization processes.</text>
</comment>
<comment type="activity regulation">
    <text evidence="1">G-protein coupled receptor activity is regulated by lipids: phosphatidylinositol 4-phosphate increases HTR1A-mediated activity.</text>
</comment>
<comment type="subunit">
    <text evidence="1 2">Heterodimer; heterodimerizes with GPER1 (By similarity). Interacts with YIF1B (By similarity). Interacts with GPR39 and GALR1 (By similarity).</text>
</comment>
<comment type="subcellular location">
    <subcellularLocation>
        <location evidence="1">Cell membrane</location>
        <topology evidence="1">Multi-pass membrane protein</topology>
    </subcellularLocation>
    <subcellularLocation>
        <location evidence="2">Cell projection</location>
        <location evidence="2">Dendrite</location>
    </subcellularLocation>
</comment>
<comment type="similarity">
    <text evidence="5">Belongs to the G-protein coupled receptor 1 family. 5-hydroxytryptamine receptor subfamily. HTR1A sub-subfamily.</text>
</comment>